<dbReference type="EC" id="6.3.2.2"/>
<dbReference type="EMBL" id="CP000431">
    <property type="protein sequence ID" value="ABG96031.1"/>
    <property type="molecule type" value="Genomic_DNA"/>
</dbReference>
<dbReference type="RefSeq" id="WP_011596695.1">
    <property type="nucleotide sequence ID" value="NC_008268.1"/>
</dbReference>
<dbReference type="SMR" id="Q0S8V5"/>
<dbReference type="KEGG" id="rha:RHA1_ro04240"/>
<dbReference type="PATRIC" id="fig|101510.16.peg.4267"/>
<dbReference type="eggNOG" id="COG1473">
    <property type="taxonomic scope" value="Bacteria"/>
</dbReference>
<dbReference type="eggNOG" id="COG2170">
    <property type="taxonomic scope" value="Bacteria"/>
</dbReference>
<dbReference type="HOGENOM" id="CLU_019405_0_0_11"/>
<dbReference type="OrthoDB" id="9803842at2"/>
<dbReference type="Proteomes" id="UP000008710">
    <property type="component" value="Chromosome"/>
</dbReference>
<dbReference type="GO" id="GO:0005524">
    <property type="term" value="F:ATP binding"/>
    <property type="evidence" value="ECO:0007669"/>
    <property type="project" value="UniProtKB-KW"/>
</dbReference>
<dbReference type="GO" id="GO:0004357">
    <property type="term" value="F:glutamate-cysteine ligase activity"/>
    <property type="evidence" value="ECO:0007669"/>
    <property type="project" value="UniProtKB-EC"/>
</dbReference>
<dbReference type="GO" id="GO:0016787">
    <property type="term" value="F:hydrolase activity"/>
    <property type="evidence" value="ECO:0007669"/>
    <property type="project" value="InterPro"/>
</dbReference>
<dbReference type="GO" id="GO:0042398">
    <property type="term" value="P:modified amino acid biosynthetic process"/>
    <property type="evidence" value="ECO:0007669"/>
    <property type="project" value="InterPro"/>
</dbReference>
<dbReference type="CDD" id="cd08014">
    <property type="entry name" value="M20_Acy1-like"/>
    <property type="match status" value="1"/>
</dbReference>
<dbReference type="Gene3D" id="3.30.590.20">
    <property type="match status" value="1"/>
</dbReference>
<dbReference type="Gene3D" id="3.30.70.360">
    <property type="match status" value="1"/>
</dbReference>
<dbReference type="Gene3D" id="3.40.630.10">
    <property type="entry name" value="Zn peptidases"/>
    <property type="match status" value="1"/>
</dbReference>
<dbReference type="HAMAP" id="MF_01609">
    <property type="entry name" value="Glu_cys_ligase_2"/>
    <property type="match status" value="1"/>
</dbReference>
<dbReference type="InterPro" id="IPR017439">
    <property type="entry name" value="Amidohydrolase"/>
</dbReference>
<dbReference type="InterPro" id="IPR036264">
    <property type="entry name" value="Bact_exopeptidase_dim_dom"/>
</dbReference>
<dbReference type="InterPro" id="IPR006336">
    <property type="entry name" value="GCS2"/>
</dbReference>
<dbReference type="InterPro" id="IPR014746">
    <property type="entry name" value="Gln_synth/guanido_kin_cat_dom"/>
</dbReference>
<dbReference type="InterPro" id="IPR002933">
    <property type="entry name" value="Peptidase_M20"/>
</dbReference>
<dbReference type="InterPro" id="IPR011793">
    <property type="entry name" value="YbdK"/>
</dbReference>
<dbReference type="NCBIfam" id="TIGR01891">
    <property type="entry name" value="amidohydrolases"/>
    <property type="match status" value="1"/>
</dbReference>
<dbReference type="NCBIfam" id="TIGR02050">
    <property type="entry name" value="gshA_cyan_rel"/>
    <property type="match status" value="1"/>
</dbReference>
<dbReference type="NCBIfam" id="NF010041">
    <property type="entry name" value="PRK13517.1-1"/>
    <property type="match status" value="1"/>
</dbReference>
<dbReference type="PANTHER" id="PTHR11014:SF63">
    <property type="entry name" value="METALLOPEPTIDASE, PUTATIVE (AFU_ORTHOLOGUE AFUA_6G09600)-RELATED"/>
    <property type="match status" value="1"/>
</dbReference>
<dbReference type="PANTHER" id="PTHR11014">
    <property type="entry name" value="PEPTIDASE M20 FAMILY MEMBER"/>
    <property type="match status" value="1"/>
</dbReference>
<dbReference type="Pfam" id="PF04107">
    <property type="entry name" value="GCS2"/>
    <property type="match status" value="1"/>
</dbReference>
<dbReference type="Pfam" id="PF01546">
    <property type="entry name" value="Peptidase_M20"/>
    <property type="match status" value="1"/>
</dbReference>
<dbReference type="SUPFAM" id="SSF55031">
    <property type="entry name" value="Bacterial exopeptidase dimerisation domain"/>
    <property type="match status" value="1"/>
</dbReference>
<dbReference type="SUPFAM" id="SSF55931">
    <property type="entry name" value="Glutamine synthetase/guanido kinase"/>
    <property type="match status" value="1"/>
</dbReference>
<dbReference type="SUPFAM" id="SSF53187">
    <property type="entry name" value="Zn-dependent exopeptidases"/>
    <property type="match status" value="1"/>
</dbReference>
<accession>Q0S8V5</accession>
<evidence type="ECO:0000250" key="1"/>
<evidence type="ECO:0000256" key="2">
    <source>
        <dbReference type="SAM" id="MobiDB-lite"/>
    </source>
</evidence>
<evidence type="ECO:0000305" key="3"/>
<keyword id="KW-0067">ATP-binding</keyword>
<keyword id="KW-0436">Ligase</keyword>
<keyword id="KW-0547">Nucleotide-binding</keyword>
<sequence length="793" mass="85751">MLASDPRKVGVEEEFHLIDLKTRRLTTRAPELLARLPDDVYVDELQQCVVEVNSGVYADLDGLRSDLERHRRLLVDAAEDLGIGVAAAGSVPLALPAEMHVTGTQRYGRMLADYQVLAREQLICGTQVHVDLPDRDEAVQVAHRVAPHMPVLLALSASSPFRSDGADTGYASARTLLWLRWPSTGPAAPVSSAAEYGALIDDLVASGVISDPGMAYFDVRPSVKLPTLELRVCDSCPRLDTVLLVAALFRALVEREVEGLRAGRKGVEVLPTLTRAALWRAARSGLEEELVDVTVPQARPASELVGDFVNSLRPQLEETGDWDRVVELSAEATAHGSSAARQRQALGRRGRLTDVVDLLLAETAGRTEHLPDVEVPPPREPGPKSTGAGRTRRYWSARFWDRGDTADMTWTESTELDEKKLVEWRRDLHAHPELSFEERRTTGVVRDHLVGLGLEPVLMPGGTGLWCDVGPETGECIALRADLDALPVAETTGLPFESRVPGVSHACGHDAHTTMLMGAASVLTKYPPPTRVRLVFQPAEETTPGGAVDTIAAGALDGVSKIFALHCDPHLEVGKLSTRTGPITSSNDSVTVRLWSAGGHTARPHLTGDLIHATAVLVTGLASVLDRRIDARTATVLTWGKVAAGQVANSVPESGELVGTLRSASRETWASLEPLVTDAICHLLAPYNVRYELSYLRGVPPVVNDPDCTADLREAIESVVGFDHLAEAHQSSGGEDFAWYLEKVPGAMARLGVWDGTGTRQELHQPGFNLDERAMIHGVRTLVALTRLEDQSG</sequence>
<comment type="function">
    <text evidence="1">ATP-dependent carboxylate-amine ligase which exhibits weak glutamate--cysteine ligase activity.</text>
</comment>
<comment type="catalytic activity">
    <reaction>
        <text>L-cysteine + L-glutamate + ATP = gamma-L-glutamyl-L-cysteine + ADP + phosphate + H(+)</text>
        <dbReference type="Rhea" id="RHEA:13285"/>
        <dbReference type="ChEBI" id="CHEBI:15378"/>
        <dbReference type="ChEBI" id="CHEBI:29985"/>
        <dbReference type="ChEBI" id="CHEBI:30616"/>
        <dbReference type="ChEBI" id="CHEBI:35235"/>
        <dbReference type="ChEBI" id="CHEBI:43474"/>
        <dbReference type="ChEBI" id="CHEBI:58173"/>
        <dbReference type="ChEBI" id="CHEBI:456216"/>
        <dbReference type="EC" id="6.3.2.2"/>
    </reaction>
</comment>
<comment type="similarity">
    <text evidence="3">In the C-terminal section; belongs to the glutamate--cysteine ligase type 2 family. YbdK subfamily.</text>
</comment>
<feature type="chain" id="PRO_0000323510" description="Putative glutamate--cysteine ligase 2-3">
    <location>
        <begin position="1"/>
        <end position="793"/>
    </location>
</feature>
<feature type="region of interest" description="Carboxylate-amine ligase">
    <location>
        <begin position="1"/>
        <end position="407"/>
    </location>
</feature>
<feature type="region of interest" description="Disordered" evidence="2">
    <location>
        <begin position="367"/>
        <end position="390"/>
    </location>
</feature>
<feature type="region of interest" description="Peptidase M20">
    <location>
        <begin position="408"/>
        <end position="793"/>
    </location>
</feature>
<organism>
    <name type="scientific">Rhodococcus jostii (strain RHA1)</name>
    <dbReference type="NCBI Taxonomy" id="101510"/>
    <lineage>
        <taxon>Bacteria</taxon>
        <taxon>Bacillati</taxon>
        <taxon>Actinomycetota</taxon>
        <taxon>Actinomycetes</taxon>
        <taxon>Mycobacteriales</taxon>
        <taxon>Nocardiaceae</taxon>
        <taxon>Rhodococcus</taxon>
    </lineage>
</organism>
<gene>
    <name type="ordered locus">RHA1_ro04240</name>
</gene>
<reference key="1">
    <citation type="journal article" date="2006" name="Proc. Natl. Acad. Sci. U.S.A.">
        <title>The complete genome of Rhodococcus sp. RHA1 provides insights into a catabolic powerhouse.</title>
        <authorList>
            <person name="McLeod M.P."/>
            <person name="Warren R.L."/>
            <person name="Hsiao W.W.L."/>
            <person name="Araki N."/>
            <person name="Myhre M."/>
            <person name="Fernandes C."/>
            <person name="Miyazawa D."/>
            <person name="Wong W."/>
            <person name="Lillquist A.L."/>
            <person name="Wang D."/>
            <person name="Dosanjh M."/>
            <person name="Hara H."/>
            <person name="Petrescu A."/>
            <person name="Morin R.D."/>
            <person name="Yang G."/>
            <person name="Stott J.M."/>
            <person name="Schein J.E."/>
            <person name="Shin H."/>
            <person name="Smailus D."/>
            <person name="Siddiqui A.S."/>
            <person name="Marra M.A."/>
            <person name="Jones S.J.M."/>
            <person name="Holt R."/>
            <person name="Brinkman F.S.L."/>
            <person name="Miyauchi K."/>
            <person name="Fukuda M."/>
            <person name="Davies J.E."/>
            <person name="Mohn W.W."/>
            <person name="Eltis L.D."/>
        </authorList>
    </citation>
    <scope>NUCLEOTIDE SEQUENCE [LARGE SCALE GENOMIC DNA]</scope>
    <source>
        <strain>RHA1</strain>
    </source>
</reference>
<protein>
    <recommendedName>
        <fullName>Putative glutamate--cysteine ligase 2-3</fullName>
        <ecNumber>6.3.2.2</ecNumber>
    </recommendedName>
    <alternativeName>
        <fullName>Gamma-glutamylcysteine synthetase 2-3</fullName>
        <shortName>GCS 2-3</shortName>
        <shortName>Gamma-GCS 2-3</shortName>
    </alternativeName>
</protein>
<name>GCS23_RHOJR</name>
<proteinExistence type="inferred from homology"/>